<proteinExistence type="evidence at protein level"/>
<comment type="function">
    <text evidence="6 9 11 12 16 21">Major secreted protein that belongs to the subtilisin family serine proteases.</text>
</comment>
<comment type="catalytic activity">
    <reaction evidence="6 9 11 12 16 21">
        <text>Hydrolysis of proteins with broad specificity for peptide bonds, and a preference for a large uncharged residue in P1. Hydrolyzes peptide amides.</text>
        <dbReference type="EC" id="3.4.21.62"/>
    </reaction>
</comment>
<comment type="activity regulation">
    <text evidence="9 11">The protease activity is completely inhibited by the serine inhibitor PMSF but is not affected by thiol group inhibitors and in the presence of dithiothreitol (PubMed:6750031). In the presence of high concentrations of o-phenanthroline the protease activity is only partially inhibited (PubMed:6750031). The pro-region plays an inhibitory role and may provide a mechanism for preventing premature activation in the secretory pathway (PubMed:2649495).</text>
</comment>
<comment type="biophysicochemical properties">
    <phDependence>
        <text evidence="6 11">Optimum pH is 9.0-10.0.</text>
    </phDependence>
    <temperatureDependence>
        <text evidence="11">Optimum temperature is 40 degrees Celsius.</text>
    </temperatureDependence>
</comment>
<comment type="subcellular location">
    <subcellularLocation>
        <location evidence="5 7 8 10 11 13 17 21">Secreted</location>
    </subcellularLocation>
    <text evidence="17">Proper secretion requires TSR1.</text>
</comment>
<comment type="induction">
    <text evidence="3 4 15 16 18 19 20">Expression is subject to at least 3 different regulatory controls, carbon, sulfur and nitrogen repression (PubMed:870075). Intracellular cysteine and ammonia appear to be the metabolic signals for sulfur and nitrogen repression (PubMed:870075). Moreover, pH regulates expression independently from other metabolic signals, with highest levels of AEP mRNA at pH 6.5 (PubMed:8842151, PubMed:9308186). The transcriptional activator RIM101 and the Rim pathway are required for the alkaline induction of gene expression (PubMed:11861549, PubMed:9199331). Two major upstream activation sequences (UASs) are essential for promoter activity under conditions of repression or full induction. The distal UAS (UAS1) is located at position -790 to -778, whereas the proximal UAS (UAS2) localizes at positions -148 to -124 (PubMed:10206713, PubMed:8264600).</text>
</comment>
<comment type="PTM">
    <text evidence="5 8 10 13 14 21">The pro-region is removed through cleavage by XPR6 after Lys156-Arg157, which yields mature active XPR2.</text>
</comment>
<comment type="PTM">
    <text evidence="7 9 14 21">The 10 consecutive -X-Ala- or -X-Pro- dipeptides located over 100 amino acids upstream of the N-terminal of mature XPR2 are subject to dipeptidyl aminopeptidase (DPAPase)-processing (PubMed:9353927). DPAPase activity is not necessary for XPR6 cleavage and for secretion of mature active XPR2 (PubMed:9353927).</text>
</comment>
<comment type="PTM">
    <text evidence="7 10 11">N-glycosylated. Glycosylation within the pro-region has no effect on secretion and maturation at 18 degrees Celsius, but is required for secretion at 28 degrees Celsius (PubMed:1995632).</text>
</comment>
<comment type="miscellaneous">
    <text evidence="5 7 9">The pro-region inhibits protease activity (PubMed:2649495) and plays an additional essential role in the proper folding of the protein into a conformation compatible with secretion (PubMed:1634541, PubMed:1995632).</text>
</comment>
<comment type="miscellaneous">
    <text evidence="8 13">Its complex processing and high level of secretion make XPR2 the perfect model to study the secretion pathway.</text>
</comment>
<comment type="similarity">
    <text evidence="24">Belongs to the peptidase S8 family.</text>
</comment>
<comment type="caution">
    <text evidence="24">Strain CLIB 122 / E 150 has a defective XPR2 sequence (xpr2-322) which lacks the N-terminus (positions 1 to 34).</text>
</comment>
<keyword id="KW-0165">Cleavage on pair of basic residues</keyword>
<keyword id="KW-0903">Direct protein sequencing</keyword>
<keyword id="KW-0325">Glycoprotein</keyword>
<keyword id="KW-0378">Hydrolase</keyword>
<keyword id="KW-0645">Protease</keyword>
<keyword id="KW-1185">Reference proteome</keyword>
<keyword id="KW-0964">Secreted</keyword>
<keyword id="KW-0720">Serine protease</keyword>
<keyword id="KW-0732">Signal</keyword>
<keyword id="KW-0865">Zymogen</keyword>
<organism>
    <name type="scientific">Yarrowia lipolytica (strain CLIB 122 / E 150)</name>
    <name type="common">Yeast</name>
    <name type="synonym">Candida lipolytica</name>
    <dbReference type="NCBI Taxonomy" id="284591"/>
    <lineage>
        <taxon>Eukaryota</taxon>
        <taxon>Fungi</taxon>
        <taxon>Dikarya</taxon>
        <taxon>Ascomycota</taxon>
        <taxon>Saccharomycotina</taxon>
        <taxon>Dipodascomycetes</taxon>
        <taxon>Dipodascales</taxon>
        <taxon>Dipodascales incertae sedis</taxon>
        <taxon>Yarrowia</taxon>
    </lineage>
</organism>
<reference key="1">
    <citation type="journal article" date="1987" name="J. Bacteriol.">
        <title>Cloning and sequencing of the alkaline extracellular protease gene of Yarrowia lipolytica.</title>
        <authorList>
            <person name="Davidow L.S."/>
            <person name="O'Donnell M.M."/>
            <person name="Kaczmarek F.S."/>
            <person name="Pereira D.A."/>
            <person name="Dezeeuw J.R."/>
            <person name="Franke A.E."/>
        </authorList>
    </citation>
    <scope>NUCLEOTIDE SEQUENCE [GENOMIC DNA]</scope>
</reference>
<reference key="2">
    <citation type="journal article" date="1988" name="Mol. Cell. Biol.">
        <title>Intracellular precursors and secretion of alkaline extracellular protease of Yarrowia lipolytica.</title>
        <authorList>
            <person name="Matoba S."/>
            <person name="Fukayama J."/>
            <person name="Wing R.A."/>
            <person name="Ogrydziak D.M."/>
        </authorList>
    </citation>
    <scope>NUCLEOTIDE SEQUENCE [GENOMIC DNA] OF 1-200</scope>
    <scope>SUBCELLULAR LOCATION</scope>
    <scope>GLYCOSYLATION AT ASN-123</scope>
    <scope>PROTEOLYTIC PROCESSING</scope>
</reference>
<reference key="3">
    <citation type="journal article" date="2004" name="Nature">
        <title>Genome evolution in yeasts.</title>
        <authorList>
            <person name="Dujon B."/>
            <person name="Sherman D."/>
            <person name="Fischer G."/>
            <person name="Durrens P."/>
            <person name="Casaregola S."/>
            <person name="Lafontaine I."/>
            <person name="de Montigny J."/>
            <person name="Marck C."/>
            <person name="Neuveglise C."/>
            <person name="Talla E."/>
            <person name="Goffard N."/>
            <person name="Frangeul L."/>
            <person name="Aigle M."/>
            <person name="Anthouard V."/>
            <person name="Babour A."/>
            <person name="Barbe V."/>
            <person name="Barnay S."/>
            <person name="Blanchin S."/>
            <person name="Beckerich J.-M."/>
            <person name="Beyne E."/>
            <person name="Bleykasten C."/>
            <person name="Boisrame A."/>
            <person name="Boyer J."/>
            <person name="Cattolico L."/>
            <person name="Confanioleri F."/>
            <person name="de Daruvar A."/>
            <person name="Despons L."/>
            <person name="Fabre E."/>
            <person name="Fairhead C."/>
            <person name="Ferry-Dumazet H."/>
            <person name="Groppi A."/>
            <person name="Hantraye F."/>
            <person name="Hennequin C."/>
            <person name="Jauniaux N."/>
            <person name="Joyet P."/>
            <person name="Kachouri R."/>
            <person name="Kerrest A."/>
            <person name="Koszul R."/>
            <person name="Lemaire M."/>
            <person name="Lesur I."/>
            <person name="Ma L."/>
            <person name="Muller H."/>
            <person name="Nicaud J.-M."/>
            <person name="Nikolski M."/>
            <person name="Oztas S."/>
            <person name="Ozier-Kalogeropoulos O."/>
            <person name="Pellenz S."/>
            <person name="Potier S."/>
            <person name="Richard G.-F."/>
            <person name="Straub M.-L."/>
            <person name="Suleau A."/>
            <person name="Swennen D."/>
            <person name="Tekaia F."/>
            <person name="Wesolowski-Louvel M."/>
            <person name="Westhof E."/>
            <person name="Wirth B."/>
            <person name="Zeniou-Meyer M."/>
            <person name="Zivanovic Y."/>
            <person name="Bolotin-Fukuhara M."/>
            <person name="Thierry A."/>
            <person name="Bouchier C."/>
            <person name="Caudron B."/>
            <person name="Scarpelli C."/>
            <person name="Gaillardin C."/>
            <person name="Weissenbach J."/>
            <person name="Wincker P."/>
            <person name="Souciet J.-L."/>
        </authorList>
    </citation>
    <scope>NUCLEOTIDE SEQUENCE [LARGE SCALE GENOMIC DNA] OF 35-454</scope>
    <source>
        <strain>CLIB 122 / E 150</strain>
    </source>
</reference>
<reference key="4">
    <citation type="journal article" date="1982" name="J. Gen. Microbiol.">
        <title>Alkaline extracellular protease produced by Saccharomycopsis lipolytica CX161-1B.</title>
        <authorList>
            <person name="Ogrydziak D.M."/>
            <person name="Scharf S.J."/>
        </authorList>
    </citation>
    <scope>PROTEIN SEQUENCE OF 158-182</scope>
    <scope>SUBCELLULAR LOCATION</scope>
    <scope>FUNCTION</scope>
    <scope>CATALYTIC ACTIVITY</scope>
    <scope>BIOPHYSICOCHEMICAL PROPERTIES</scope>
    <scope>ACTIVITY REGULATION</scope>
    <scope>GLYCOSYLATION</scope>
</reference>
<reference key="5">
    <citation type="journal article" date="1977" name="Biochim. Biophys. Acta">
        <title>Regulation of extracellular protease production in Candida lipolytica.</title>
        <authorList>
            <person name="Ogrydziak D.M."/>
            <person name="Demain A.L."/>
            <person name="Tannenbaum S.R."/>
        </authorList>
    </citation>
    <scope>INDUCTION</scope>
    <scope>FUNCTION</scope>
    <scope>CATALYTIC ACTIVITY</scope>
</reference>
<reference key="6">
    <citation type="journal article" date="1981" name="J. Bacteriol.">
        <title>Structural gene for the alkaline extracellular protease of Saccharomycopsis lipolytica.</title>
        <authorList>
            <person name="Simms P.C."/>
            <person name="Ogrydziak D.M."/>
        </authorList>
    </citation>
    <scope>FUNCTION</scope>
    <scope>CATALYTIC ACTIVITY</scope>
</reference>
<reference key="7">
    <citation type="journal article" date="1989" name="J. Biol. Chem.">
        <title>A novel location for dipeptidyl aminopeptidase processing sites in the alkaline extracellular protease of Yarrowia lipolytica.</title>
        <authorList>
            <person name="Matoba S."/>
            <person name="Ogrydziak D.M."/>
        </authorList>
    </citation>
    <scope>PROTEOLYTIC PROCESSING</scope>
    <scope>ACTIVITY REGULATION</scope>
    <scope>FUNCTION</scope>
    <scope>CATALYTIC ACTIVITY</scope>
</reference>
<reference key="8">
    <citation type="journal article" date="1991" name="J. Biol. Chem.">
        <title>Role of the proregion in the production and secretion of the Yarrowia lipolytica alkaline extracellular protease.</title>
        <authorList>
            <person name="Fabre E."/>
            <person name="Nicaud J.-M."/>
            <person name="Lopez M.C."/>
            <person name="Gaillardin C."/>
        </authorList>
    </citation>
    <scope>PROTEOLYTIC PROCESSING</scope>
    <scope>FUNCTION OF THE PRO-REGION</scope>
    <scope>SUBCELLULAR LOCATION</scope>
    <scope>GLYCOSYLATION</scope>
</reference>
<reference key="9">
    <citation type="journal article" date="1992" name="J. Biol. Chem.">
        <title>Intracellular transit of a yeast protease is rescued by trans-complementation with its prodomain.</title>
        <authorList>
            <person name="Fabre E."/>
            <person name="Tharaud C."/>
            <person name="Gaillardin C."/>
        </authorList>
    </citation>
    <scope>PROTEOLYTIC PROCESSING</scope>
    <scope>FUNCTION OF THE PRO-REGION</scope>
    <scope>SUBCELLULAR LOCATION</scope>
</reference>
<reference key="10">
    <citation type="journal article" date="1994" name="Curr. Genet.">
        <title>Multiple-copy integration in the yeast Yarrowia lipolytica.</title>
        <authorList>
            <person name="Le Dall M.T."/>
            <person name="Nicaud J.M."/>
            <person name="Gaillardin C."/>
        </authorList>
    </citation>
    <scope>PROTEOLYTIC PROCESSING</scope>
    <scope>SUBCELLULAR LOCATION</scope>
    <scope>SECRETION PATHWAY OVERLOAD</scope>
</reference>
<reference key="11">
    <citation type="journal article" date="1994" name="Mol. Cell. Biol.">
        <title>Two upstream activation sequences control the expression of the XPR2 gene in the yeast Yarrowia lipolytica.</title>
        <authorList>
            <person name="Blanchin-Roland S."/>
            <person name="Cordero Otero R.R."/>
            <person name="Gaillardin C."/>
        </authorList>
    </citation>
    <scope>INDUCTION</scope>
</reference>
<reference key="12">
    <citation type="journal article" date="1994" name="Yeast">
        <title>Cloning, nucleotide sequence and functions of XPR6, which codes for a dibasic processing endoprotease from the yeast Yarrowia lipolytica.</title>
        <authorList>
            <person name="Enderlin C.S."/>
            <person name="Ogrydziak D.M."/>
        </authorList>
    </citation>
    <scope>PROTEOLYTIC PROCESSING BY XPR6</scope>
</reference>
<reference key="13">
    <citation type="journal article" date="1996" name="J. Biol. Chem.">
        <title>The TSR1 gene of Yarrowia lipolytica is involved in the signal recognition particle-dependent translocation pathway of secretory proteins.</title>
        <authorList>
            <person name="Mamoun C.B."/>
            <person name="Beckerich J.M."/>
            <person name="Gaillardin C."/>
        </authorList>
    </citation>
    <scope>SUBCELLULAR LOCATION</scope>
</reference>
<reference key="14">
    <citation type="journal article" date="1996" name="Mol. Gen. Genet.">
        <title>Dominant mutations affecting expression of pH-regulated genes in Yarrowia lipolytica.</title>
        <authorList>
            <person name="Otero R.C."/>
            <person name="Gaillardin C."/>
        </authorList>
    </citation>
    <scope>INDUCTION</scope>
</reference>
<reference key="15">
    <citation type="journal article" date="1997" name="Microbiology">
        <title>pH-regulated expression of the acid and alkaline extracellular proteases of Yarrowia lipolytica.</title>
        <authorList>
            <person name="Glover D.J."/>
            <person name="McEwen R.K."/>
            <person name="Thomas C.R."/>
            <person name="Young T.W."/>
        </authorList>
    </citation>
    <scope>INDUCTION</scope>
</reference>
<reference key="16">
    <citation type="journal article" date="1997" name="Microbiology">
        <title>Dipeptidyl aminopeptidase processing and biosynthesis of alkaline extracellular protease from Yarrowia lipolytica.</title>
        <authorList>
            <person name="Matoba S."/>
            <person name="Morano K.A."/>
            <person name="Klionsky D.J."/>
            <person name="Kim K."/>
            <person name="Ogrydziak D.M."/>
        </authorList>
    </citation>
    <scope>SIGNAL PEPTIDE</scope>
    <scope>PROTEOLYTIC PROCESSING</scope>
    <scope>SUBCELLULAR LOCATION</scope>
    <scope>MUTAGENESIS OF SER-397</scope>
    <scope>FUNCTION</scope>
    <scope>CATALYTIC ACTIVITY</scope>
</reference>
<reference key="17">
    <citation type="journal article" date="1997" name="Mol. Cell. Biol.">
        <title>Genetic analysis of regulatory mutants affecting synthesis of extracellular proteinases in the yeast Yarrowia lipolytica: identification of a RIM101/pacC homolog.</title>
        <authorList>
            <person name="Lambert M."/>
            <person name="Blanchin-Roland S."/>
            <person name="Le Louedec F."/>
            <person name="Lepingle A."/>
            <person name="Gaillardin C."/>
        </authorList>
    </citation>
    <scope>INDUCTION</scope>
</reference>
<reference key="18">
    <citation type="journal article" date="1999" name="Microbiology">
        <title>Functional analysis of upstream regulating regions from the Yarrowia lipolytica XPR2 promoter.</title>
        <authorList>
            <person name="Madzak C."/>
            <person name="Blanchin-Roland S."/>
            <person name="Cordero-Otero R.R."/>
            <person name="Gaillardin C."/>
        </authorList>
    </citation>
    <scope>INDUCTION</scope>
</reference>
<reference key="19">
    <citation type="journal article" date="2002" name="Genetics">
        <title>Genetic control of extracellular protease synthesis in the yeast Yarrowia lipolytica.</title>
        <authorList>
            <person name="Gonzalez-Lopez C.I."/>
            <person name="Szabo R."/>
            <person name="Blanchin-Roland S."/>
            <person name="Gaillardin C."/>
        </authorList>
    </citation>
    <scope>INDUCTION</scope>
</reference>
<reference key="20">
    <citation type="journal article" date="2007" name="J. Agric. Food Chem.">
        <title>Cloning and expression of the XPR2 gene from Yarrowia lipolytica in Pichia pastoris.</title>
        <authorList>
            <person name="Poza M."/>
            <person name="Sestelo A.B."/>
            <person name="Ageitos J.M."/>
            <person name="Vallejo J.A."/>
            <person name="Veiga-Crespo P."/>
            <person name="Villa T.G."/>
        </authorList>
    </citation>
    <scope>FUNCTION</scope>
    <scope>CATALYTIC ACTIVITY</scope>
    <scope>BIOPHYSICOCHEMICAL PROPERTIES</scope>
</reference>
<reference key="21">
    <citation type="journal article" date="2012" name="FEMS Yeast Res.">
        <title>Characterization of Yarrowia lipolytica XPR2 multi-copy strains over-producing alkaline extracellular protease - a system for rapidly increasing secretory pathway cargo loads.</title>
        <authorList>
            <person name="Ogrydziak D.M."/>
            <person name="Nicaud J.M."/>
        </authorList>
    </citation>
    <scope>PROTEOLYTIC PROCESSING</scope>
    <scope>SUBCELLULAR LOCATION</scope>
    <scope>SECRETION PATHWAY OVERLOAD</scope>
</reference>
<evidence type="ECO:0000255" key="1"/>
<evidence type="ECO:0000255" key="2">
    <source>
        <dbReference type="PROSITE-ProRule" id="PRU01240"/>
    </source>
</evidence>
<evidence type="ECO:0000269" key="3">
    <source>
    </source>
</evidence>
<evidence type="ECO:0000269" key="4">
    <source>
    </source>
</evidence>
<evidence type="ECO:0000269" key="5">
    <source>
    </source>
</evidence>
<evidence type="ECO:0000269" key="6">
    <source>
    </source>
</evidence>
<evidence type="ECO:0000269" key="7">
    <source>
    </source>
</evidence>
<evidence type="ECO:0000269" key="8">
    <source>
    </source>
</evidence>
<evidence type="ECO:0000269" key="9">
    <source>
    </source>
</evidence>
<evidence type="ECO:0000269" key="10">
    <source>
    </source>
</evidence>
<evidence type="ECO:0000269" key="11">
    <source>
    </source>
</evidence>
<evidence type="ECO:0000269" key="12">
    <source>
    </source>
</evidence>
<evidence type="ECO:0000269" key="13">
    <source>
    </source>
</evidence>
<evidence type="ECO:0000269" key="14">
    <source>
    </source>
</evidence>
<evidence type="ECO:0000269" key="15">
    <source>
    </source>
</evidence>
<evidence type="ECO:0000269" key="16">
    <source>
    </source>
</evidence>
<evidence type="ECO:0000269" key="17">
    <source>
    </source>
</evidence>
<evidence type="ECO:0000269" key="18">
    <source>
    </source>
</evidence>
<evidence type="ECO:0000269" key="19">
    <source>
    </source>
</evidence>
<evidence type="ECO:0000269" key="20">
    <source>
    </source>
</evidence>
<evidence type="ECO:0000269" key="21">
    <source>
    </source>
</evidence>
<evidence type="ECO:0000303" key="22">
    <source>
    </source>
</evidence>
<evidence type="ECO:0000303" key="23">
    <source>
    </source>
</evidence>
<evidence type="ECO:0000305" key="24"/>
<accession>P09230</accession>
<accession>Q6BZQ0</accession>
<feature type="signal peptide" evidence="21">
    <location>
        <begin position="1"/>
        <end position="15"/>
    </location>
</feature>
<feature type="propeptide" id="PRO_0000026984" evidence="11 21">
    <location>
        <begin position="16"/>
        <end position="157"/>
    </location>
</feature>
<feature type="chain" id="PRO_0000026985" description="Alkaline extracellular protease">
    <location>
        <begin position="158"/>
        <end position="454"/>
    </location>
</feature>
<feature type="domain" description="Inhibitor I9" evidence="1">
    <location>
        <begin position="68"/>
        <end position="146"/>
    </location>
</feature>
<feature type="domain" description="Peptidase S8" evidence="2">
    <location>
        <begin position="166"/>
        <end position="454"/>
    </location>
</feature>
<feature type="active site" description="Charge relay system" evidence="2">
    <location>
        <position position="200"/>
    </location>
</feature>
<feature type="active site" description="Charge relay system" evidence="2">
    <location>
        <position position="231"/>
    </location>
</feature>
<feature type="active site" description="Charge relay system" evidence="2">
    <location>
        <position position="397"/>
    </location>
</feature>
<feature type="glycosylation site" description="N-linked (GlcNAc...) asparagine" evidence="10">
    <location>
        <position position="123"/>
    </location>
</feature>
<feature type="mutagenesis site" description="Abolishes protease activity, but not maturation." evidence="21">
    <original>S</original>
    <variation>A</variation>
    <location>
        <position position="397"/>
    </location>
</feature>
<name>AEP_YARLI</name>
<protein>
    <recommendedName>
        <fullName evidence="22">Alkaline extracellular protease</fullName>
        <shortName evidence="22">AEP</shortName>
        <ecNumber evidence="9 11 12 16 21">3.4.21.62</ecNumber>
    </recommendedName>
</protein>
<gene>
    <name evidence="23" type="primary">XPR2</name>
    <name type="ordered locus">YALI0F31889g</name>
</gene>
<sequence>MKLATAFTILTAVLAAPLAAPAPAPDAAPAAVPEGPAAAAYSSILSVVAKQSKKFKHHKRDLDEKDQFIVVFDSSATVDQIASEIQKLDSLVDEDSSNGITSALDLPVYTDGSGFLGFVGKFNSTIVDKLKESSVLTVEPDTIVSLPEIPASSNAKRAIQTTPVTQWGLSRISHKKAQTGNYAYVRETVGKHPTVSYVVDSGIRTTHSEFGGRAVWGANFADTQNADLLGHGTHVAGTVGGKTYGVDANTKLVAVKVFAGRSAALSVINQGFTWALNDYISKRDTLPRGVLNFSGGGPKSASQDALWSRATQEGLLVAIAAGNDAVDACNDSPGNIGGSTSGIITVGSIDSSDKISVWSGGQGSNYGTCVDVFAPGSDIISASYQSDSGTLVYSGTSMACPHVAGLASYYLSINDEVLTPAQVEALITESNTGVLPTTNLKGSPNAVAYNGVGI</sequence>
<dbReference type="EC" id="3.4.21.62" evidence="9 11 12 16 21"/>
<dbReference type="EMBL" id="M17741">
    <property type="protein sequence ID" value="AAA35242.1"/>
    <property type="molecule type" value="Genomic_DNA"/>
</dbReference>
<dbReference type="EMBL" id="M23353">
    <property type="protein sequence ID" value="AAA35250.1"/>
    <property type="molecule type" value="Genomic_DNA"/>
</dbReference>
<dbReference type="EMBL" id="CR382132">
    <property type="status" value="NOT_ANNOTATED_CDS"/>
    <property type="molecule type" value="Genomic_DNA"/>
</dbReference>
<dbReference type="PIR" id="A26955">
    <property type="entry name" value="A26955"/>
</dbReference>
<dbReference type="RefSeq" id="XP_504435.1">
    <property type="nucleotide sequence ID" value="XM_504435.1"/>
</dbReference>
<dbReference type="SMR" id="P09230"/>
<dbReference type="STRING" id="284591.P09230"/>
<dbReference type="MEROPS" id="S08.055"/>
<dbReference type="GlyCosmos" id="P09230">
    <property type="glycosylation" value="1 site, No reported glycans"/>
</dbReference>
<dbReference type="iPTMnet" id="P09230"/>
<dbReference type="KEGG" id="yli:2912306"/>
<dbReference type="InParanoid" id="P09230"/>
<dbReference type="Proteomes" id="UP000001300">
    <property type="component" value="Chromosome F"/>
</dbReference>
<dbReference type="GO" id="GO:0005615">
    <property type="term" value="C:extracellular space"/>
    <property type="evidence" value="ECO:0000318"/>
    <property type="project" value="GO_Central"/>
</dbReference>
<dbReference type="GO" id="GO:0004252">
    <property type="term" value="F:serine-type endopeptidase activity"/>
    <property type="evidence" value="ECO:0000318"/>
    <property type="project" value="GO_Central"/>
</dbReference>
<dbReference type="GO" id="GO:0006508">
    <property type="term" value="P:proteolysis"/>
    <property type="evidence" value="ECO:0007669"/>
    <property type="project" value="UniProtKB-KW"/>
</dbReference>
<dbReference type="CDD" id="cd04077">
    <property type="entry name" value="Peptidases_S8_PCSK9_ProteinaseK_like"/>
    <property type="match status" value="1"/>
</dbReference>
<dbReference type="FunFam" id="3.40.50.200:FF:000007">
    <property type="entry name" value="Subtilisin-like serine protease"/>
    <property type="match status" value="1"/>
</dbReference>
<dbReference type="Gene3D" id="3.40.50.200">
    <property type="entry name" value="Peptidase S8/S53 domain"/>
    <property type="match status" value="1"/>
</dbReference>
<dbReference type="InterPro" id="IPR034193">
    <property type="entry name" value="PCSK9_ProteinaseK-like"/>
</dbReference>
<dbReference type="InterPro" id="IPR000209">
    <property type="entry name" value="Peptidase_S8/S53_dom"/>
</dbReference>
<dbReference type="InterPro" id="IPR036852">
    <property type="entry name" value="Peptidase_S8/S53_dom_sf"/>
</dbReference>
<dbReference type="InterPro" id="IPR023827">
    <property type="entry name" value="Peptidase_S8_Asp-AS"/>
</dbReference>
<dbReference type="InterPro" id="IPR022398">
    <property type="entry name" value="Peptidase_S8_His-AS"/>
</dbReference>
<dbReference type="InterPro" id="IPR023828">
    <property type="entry name" value="Peptidase_S8_Ser-AS"/>
</dbReference>
<dbReference type="InterPro" id="IPR050131">
    <property type="entry name" value="Peptidase_S8_subtilisin-like"/>
</dbReference>
<dbReference type="InterPro" id="IPR015500">
    <property type="entry name" value="Peptidase_S8_subtilisin-rel"/>
</dbReference>
<dbReference type="InterPro" id="IPR010259">
    <property type="entry name" value="S8pro/Inhibitor_I9"/>
</dbReference>
<dbReference type="PANTHER" id="PTHR43806:SF11">
    <property type="entry name" value="CEREVISIN-RELATED"/>
    <property type="match status" value="1"/>
</dbReference>
<dbReference type="PANTHER" id="PTHR43806">
    <property type="entry name" value="PEPTIDASE S8"/>
    <property type="match status" value="1"/>
</dbReference>
<dbReference type="Pfam" id="PF05922">
    <property type="entry name" value="Inhibitor_I9"/>
    <property type="match status" value="1"/>
</dbReference>
<dbReference type="Pfam" id="PF00082">
    <property type="entry name" value="Peptidase_S8"/>
    <property type="match status" value="1"/>
</dbReference>
<dbReference type="PRINTS" id="PR00723">
    <property type="entry name" value="SUBTILISIN"/>
</dbReference>
<dbReference type="SUPFAM" id="SSF54897">
    <property type="entry name" value="Protease propeptides/inhibitors"/>
    <property type="match status" value="1"/>
</dbReference>
<dbReference type="SUPFAM" id="SSF52743">
    <property type="entry name" value="Subtilisin-like"/>
    <property type="match status" value="1"/>
</dbReference>
<dbReference type="PROSITE" id="PS51892">
    <property type="entry name" value="SUBTILASE"/>
    <property type="match status" value="1"/>
</dbReference>
<dbReference type="PROSITE" id="PS00136">
    <property type="entry name" value="SUBTILASE_ASP"/>
    <property type="match status" value="1"/>
</dbReference>
<dbReference type="PROSITE" id="PS00137">
    <property type="entry name" value="SUBTILASE_HIS"/>
    <property type="match status" value="1"/>
</dbReference>
<dbReference type="PROSITE" id="PS00138">
    <property type="entry name" value="SUBTILASE_SER"/>
    <property type="match status" value="1"/>
</dbReference>